<gene>
    <name type="primary">GUCA1A</name>
    <name type="synonym">GCAP1</name>
</gene>
<feature type="initiator methionine" description="Removed" evidence="2">
    <location>
        <position position="1"/>
    </location>
</feature>
<feature type="chain" id="PRO_0000073806" description="Guanylyl cyclase-activating protein 1">
    <location>
        <begin position="2"/>
        <end position="205"/>
    </location>
</feature>
<feature type="domain" description="EF-hand 1" evidence="3">
    <location>
        <begin position="30"/>
        <end position="48"/>
    </location>
</feature>
<feature type="domain" description="EF-hand 2" evidence="3">
    <location>
        <begin position="50"/>
        <end position="85"/>
    </location>
</feature>
<feature type="domain" description="EF-hand 3" evidence="3">
    <location>
        <begin position="86"/>
        <end position="121"/>
    </location>
</feature>
<feature type="domain" description="EF-hand 4" evidence="3">
    <location>
        <begin position="129"/>
        <end position="164"/>
    </location>
</feature>
<feature type="binding site" evidence="3">
    <location>
        <position position="63"/>
    </location>
    <ligand>
        <name>Ca(2+)</name>
        <dbReference type="ChEBI" id="CHEBI:29108"/>
        <label>1</label>
    </ligand>
</feature>
<feature type="binding site" evidence="3">
    <location>
        <position position="65"/>
    </location>
    <ligand>
        <name>Ca(2+)</name>
        <dbReference type="ChEBI" id="CHEBI:29108"/>
        <label>1</label>
    </ligand>
</feature>
<feature type="binding site" evidence="3">
    <location>
        <position position="67"/>
    </location>
    <ligand>
        <name>Ca(2+)</name>
        <dbReference type="ChEBI" id="CHEBI:29108"/>
        <label>1</label>
    </ligand>
</feature>
<feature type="binding site" evidence="3">
    <location>
        <position position="69"/>
    </location>
    <ligand>
        <name>Ca(2+)</name>
        <dbReference type="ChEBI" id="CHEBI:29108"/>
        <label>1</label>
    </ligand>
</feature>
<feature type="binding site" evidence="3">
    <location>
        <position position="74"/>
    </location>
    <ligand>
        <name>Ca(2+)</name>
        <dbReference type="ChEBI" id="CHEBI:29108"/>
        <label>1</label>
    </ligand>
</feature>
<feature type="binding site" evidence="3">
    <location>
        <position position="99"/>
    </location>
    <ligand>
        <name>Ca(2+)</name>
        <dbReference type="ChEBI" id="CHEBI:29108"/>
        <label>2</label>
    </ligand>
</feature>
<feature type="binding site" evidence="3">
    <location>
        <position position="101"/>
    </location>
    <ligand>
        <name>Ca(2+)</name>
        <dbReference type="ChEBI" id="CHEBI:29108"/>
        <label>2</label>
    </ligand>
</feature>
<feature type="binding site" evidence="3">
    <location>
        <position position="103"/>
    </location>
    <ligand>
        <name>Ca(2+)</name>
        <dbReference type="ChEBI" id="CHEBI:29108"/>
        <label>2</label>
    </ligand>
</feature>
<feature type="binding site" evidence="3">
    <location>
        <position position="105"/>
    </location>
    <ligand>
        <name>Ca(2+)</name>
        <dbReference type="ChEBI" id="CHEBI:29108"/>
        <label>2</label>
    </ligand>
</feature>
<feature type="binding site" evidence="3">
    <location>
        <position position="110"/>
    </location>
    <ligand>
        <name>Ca(2+)</name>
        <dbReference type="ChEBI" id="CHEBI:29108"/>
        <label>2</label>
    </ligand>
</feature>
<feature type="binding site" evidence="3">
    <location>
        <position position="142"/>
    </location>
    <ligand>
        <name>Ca(2+)</name>
        <dbReference type="ChEBI" id="CHEBI:29108"/>
        <label>3</label>
    </ligand>
</feature>
<feature type="binding site" evidence="3">
    <location>
        <position position="144"/>
    </location>
    <ligand>
        <name>Ca(2+)</name>
        <dbReference type="ChEBI" id="CHEBI:29108"/>
        <label>3</label>
    </ligand>
</feature>
<feature type="binding site" evidence="3">
    <location>
        <position position="146"/>
    </location>
    <ligand>
        <name>Ca(2+)</name>
        <dbReference type="ChEBI" id="CHEBI:29108"/>
        <label>3</label>
    </ligand>
</feature>
<feature type="binding site" evidence="3">
    <location>
        <position position="148"/>
    </location>
    <ligand>
        <name>Ca(2+)</name>
        <dbReference type="ChEBI" id="CHEBI:29108"/>
        <label>3</label>
    </ligand>
</feature>
<feature type="binding site" evidence="3">
    <location>
        <position position="153"/>
    </location>
    <ligand>
        <name>Ca(2+)</name>
        <dbReference type="ChEBI" id="CHEBI:29108"/>
        <label>3</label>
    </ligand>
</feature>
<feature type="modified residue" description="Deamidated asparagine" evidence="2">
    <location>
        <position position="3"/>
    </location>
</feature>
<feature type="lipid moiety-binding region" description="N-myristoyl glycine" evidence="1">
    <location>
        <position position="2"/>
    </location>
</feature>
<protein>
    <recommendedName>
        <fullName>Guanylyl cyclase-activating protein 1</fullName>
        <shortName>GCAP 1</shortName>
    </recommendedName>
    <alternativeName>
        <fullName>Guanylate cyclase activator 1A</fullName>
    </alternativeName>
</protein>
<proteinExistence type="evidence at transcript level"/>
<accession>O73761</accession>
<sequence>MGNMDGKTVEELSATEIHRWYKKFMTECPSGQLTQHEFKQFFGLKNLSPASNQYIEQMFDTFDFNKDGYMDFMEYVAALSLVLKGKVEQKLRWYFKLYDVDGNGCIDRGELLNIIKAIRAINRCNDEMTAEEFTDMVFDKIDINGDGELSLEEFIEGVQKDELLLEVLTRSLDLKHIVYMIQNDGKRMEISERPRQEITTGNSLP</sequence>
<name>GUC1A_LITPI</name>
<keyword id="KW-0106">Calcium</keyword>
<keyword id="KW-0449">Lipoprotein</keyword>
<keyword id="KW-0479">Metal-binding</keyword>
<keyword id="KW-0519">Myristate</keyword>
<keyword id="KW-0677">Repeat</keyword>
<keyword id="KW-0716">Sensory transduction</keyword>
<keyword id="KW-0844">Vision</keyword>
<evidence type="ECO:0000250" key="1">
    <source>
        <dbReference type="UniProtKB" id="P46065"/>
    </source>
</evidence>
<evidence type="ECO:0000255" key="2"/>
<evidence type="ECO:0000255" key="3">
    <source>
        <dbReference type="PROSITE-ProRule" id="PRU00448"/>
    </source>
</evidence>
<evidence type="ECO:0000269" key="4">
    <source>
    </source>
</evidence>
<reference key="1">
    <citation type="journal article" date="1998" name="Eur. J. Biochem.">
        <title>Guanylate-cyclase-inhibitory protein is a frog retinal Ca2+-binding protein related to mammalian guanylate-cyclase-activating proteins.</title>
        <authorList>
            <person name="Li N."/>
            <person name="Fariss R.N."/>
            <person name="Zhang K."/>
            <person name="Otto-Bruc A.E."/>
            <person name="Haeseleer F."/>
            <person name="Bronson J.D."/>
            <person name="Qin N."/>
            <person name="Yamazaki A."/>
            <person name="Subbaraya I."/>
            <person name="Milam A.H."/>
            <person name="Palczewski K."/>
            <person name="Baehr W."/>
        </authorList>
    </citation>
    <scope>NUCLEOTIDE SEQUENCE [MRNA]</scope>
    <scope>TISSUE SPECIFICITY</scope>
    <source>
        <tissue>Retina</tissue>
    </source>
</reference>
<dbReference type="EMBL" id="AF047882">
    <property type="protein sequence ID" value="AAC15876.1"/>
    <property type="molecule type" value="mRNA"/>
</dbReference>
<dbReference type="SMR" id="O73761"/>
<dbReference type="GO" id="GO:0120199">
    <property type="term" value="C:cone photoreceptor outer segment"/>
    <property type="evidence" value="ECO:0007669"/>
    <property type="project" value="TreeGrafter"/>
</dbReference>
<dbReference type="GO" id="GO:0001917">
    <property type="term" value="C:photoreceptor inner segment"/>
    <property type="evidence" value="ECO:0007669"/>
    <property type="project" value="TreeGrafter"/>
</dbReference>
<dbReference type="GO" id="GO:0005509">
    <property type="term" value="F:calcium ion binding"/>
    <property type="evidence" value="ECO:0007669"/>
    <property type="project" value="InterPro"/>
</dbReference>
<dbReference type="GO" id="GO:0008048">
    <property type="term" value="F:calcium sensitive guanylate cyclase activator activity"/>
    <property type="evidence" value="ECO:0007669"/>
    <property type="project" value="TreeGrafter"/>
</dbReference>
<dbReference type="GO" id="GO:0007601">
    <property type="term" value="P:visual perception"/>
    <property type="evidence" value="ECO:0007669"/>
    <property type="project" value="UniProtKB-KW"/>
</dbReference>
<dbReference type="CDD" id="cd00051">
    <property type="entry name" value="EFh"/>
    <property type="match status" value="2"/>
</dbReference>
<dbReference type="FunFam" id="1.10.238.10:FF:000052">
    <property type="entry name" value="Guanylate cyclase activator 1A"/>
    <property type="match status" value="1"/>
</dbReference>
<dbReference type="Gene3D" id="1.10.238.10">
    <property type="entry name" value="EF-hand"/>
    <property type="match status" value="2"/>
</dbReference>
<dbReference type="InterPro" id="IPR011992">
    <property type="entry name" value="EF-hand-dom_pair"/>
</dbReference>
<dbReference type="InterPro" id="IPR018247">
    <property type="entry name" value="EF_Hand_1_Ca_BS"/>
</dbReference>
<dbReference type="InterPro" id="IPR002048">
    <property type="entry name" value="EF_hand_dom"/>
</dbReference>
<dbReference type="InterPro" id="IPR028846">
    <property type="entry name" value="Recoverin"/>
</dbReference>
<dbReference type="PANTHER" id="PTHR23055">
    <property type="entry name" value="CALCIUM BINDING PROTEINS"/>
    <property type="match status" value="1"/>
</dbReference>
<dbReference type="PANTHER" id="PTHR23055:SF13">
    <property type="entry name" value="GUANYLYL CYCLASE-ACTIVATING PROTEIN 1"/>
    <property type="match status" value="1"/>
</dbReference>
<dbReference type="Pfam" id="PF13499">
    <property type="entry name" value="EF-hand_7"/>
    <property type="match status" value="1"/>
</dbReference>
<dbReference type="Pfam" id="PF13833">
    <property type="entry name" value="EF-hand_8"/>
    <property type="match status" value="1"/>
</dbReference>
<dbReference type="PRINTS" id="PR00450">
    <property type="entry name" value="RECOVERIN"/>
</dbReference>
<dbReference type="SMART" id="SM00054">
    <property type="entry name" value="EFh"/>
    <property type="match status" value="3"/>
</dbReference>
<dbReference type="SUPFAM" id="SSF47473">
    <property type="entry name" value="EF-hand"/>
    <property type="match status" value="1"/>
</dbReference>
<dbReference type="PROSITE" id="PS00018">
    <property type="entry name" value="EF_HAND_1"/>
    <property type="match status" value="3"/>
</dbReference>
<dbReference type="PROSITE" id="PS50222">
    <property type="entry name" value="EF_HAND_2"/>
    <property type="match status" value="4"/>
</dbReference>
<organism>
    <name type="scientific">Lithobates pipiens</name>
    <name type="common">Northern leopard frog</name>
    <name type="synonym">Rana pipiens</name>
    <dbReference type="NCBI Taxonomy" id="8404"/>
    <lineage>
        <taxon>Eukaryota</taxon>
        <taxon>Metazoa</taxon>
        <taxon>Chordata</taxon>
        <taxon>Craniata</taxon>
        <taxon>Vertebrata</taxon>
        <taxon>Euteleostomi</taxon>
        <taxon>Amphibia</taxon>
        <taxon>Batrachia</taxon>
        <taxon>Anura</taxon>
        <taxon>Neobatrachia</taxon>
        <taxon>Ranoidea</taxon>
        <taxon>Ranidae</taxon>
        <taxon>Lithobates</taxon>
    </lineage>
</organism>
<comment type="function">
    <text evidence="1">Regulatory protein that inhibits guanylyl cyclase when free calcium ions concentration is elevated. This Ca(2+)-sensitive regulation of retinal guanylyl cyclase is a key event in recovery of the dark state of rod photoreceptors following light exposure.</text>
</comment>
<comment type="tissue specificity">
    <text evidence="4">Retina.</text>
</comment>
<comment type="domain">
    <text evidence="1">Binds three calcium ions (via EF-hands 2, 3 and 4) when calcium levels are high. Binds Mg(2+) when calcium levels are low.</text>
</comment>